<gene>
    <name evidence="6" type="primary">DPAS</name>
    <name evidence="8" type="ORF">Caros004542</name>
    <name evidence="9" type="ORF">Cr033537</name>
</gene>
<dbReference type="EC" id="1.3.1.128" evidence="4 5"/>
<dbReference type="EMBL" id="KU865331">
    <property type="protein sequence ID" value="ANQ45231.1"/>
    <property type="molecule type" value="mRNA"/>
</dbReference>
<dbReference type="PDB" id="8B27">
    <property type="method" value="X-ray"/>
    <property type="resolution" value="2.45 A"/>
    <property type="chains" value="A/B=1-365"/>
</dbReference>
<dbReference type="PDBsum" id="8B27"/>
<dbReference type="SMR" id="A0A1B1FHP3"/>
<dbReference type="GlyCosmos" id="A0A1B1FHP3">
    <property type="glycosylation" value="2 sites, No reported glycans"/>
</dbReference>
<dbReference type="KEGG" id="ag:ANQ45231"/>
<dbReference type="OrthoDB" id="1879366at2759"/>
<dbReference type="BioCyc" id="MetaCyc:MONOMER-20638"/>
<dbReference type="GO" id="GO:0005829">
    <property type="term" value="C:cytosol"/>
    <property type="evidence" value="ECO:0000314"/>
    <property type="project" value="UniProtKB"/>
</dbReference>
<dbReference type="GO" id="GO:0046872">
    <property type="term" value="F:metal ion binding"/>
    <property type="evidence" value="ECO:0007669"/>
    <property type="project" value="UniProtKB-KW"/>
</dbReference>
<dbReference type="GO" id="GO:0016616">
    <property type="term" value="F:oxidoreductase activity, acting on the CH-OH group of donors, NAD or NADP as acceptor"/>
    <property type="evidence" value="ECO:0007669"/>
    <property type="project" value="InterPro"/>
</dbReference>
<dbReference type="GO" id="GO:0042803">
    <property type="term" value="F:protein homodimerization activity"/>
    <property type="evidence" value="ECO:0000314"/>
    <property type="project" value="UniProtKB"/>
</dbReference>
<dbReference type="GO" id="GO:0009821">
    <property type="term" value="P:alkaloid biosynthetic process"/>
    <property type="evidence" value="ECO:0000315"/>
    <property type="project" value="UniProtKB"/>
</dbReference>
<dbReference type="CDD" id="cd05283">
    <property type="entry name" value="CAD1"/>
    <property type="match status" value="1"/>
</dbReference>
<dbReference type="FunFam" id="3.40.50.720:FF:000022">
    <property type="entry name" value="Cinnamyl alcohol dehydrogenase"/>
    <property type="match status" value="1"/>
</dbReference>
<dbReference type="FunFam" id="3.90.180.10:FF:000100">
    <property type="entry name" value="Putative cinnamyl alcohol dehydrogenase 6"/>
    <property type="match status" value="1"/>
</dbReference>
<dbReference type="Gene3D" id="3.90.180.10">
    <property type="entry name" value="Medium-chain alcohol dehydrogenases, catalytic domain"/>
    <property type="match status" value="1"/>
</dbReference>
<dbReference type="Gene3D" id="3.40.50.720">
    <property type="entry name" value="NAD(P)-binding Rossmann-like Domain"/>
    <property type="match status" value="1"/>
</dbReference>
<dbReference type="InterPro" id="IPR013149">
    <property type="entry name" value="ADH-like_C"/>
</dbReference>
<dbReference type="InterPro" id="IPR013154">
    <property type="entry name" value="ADH-like_N"/>
</dbReference>
<dbReference type="InterPro" id="IPR047109">
    <property type="entry name" value="CAD-like"/>
</dbReference>
<dbReference type="InterPro" id="IPR011032">
    <property type="entry name" value="GroES-like_sf"/>
</dbReference>
<dbReference type="InterPro" id="IPR036291">
    <property type="entry name" value="NAD(P)-bd_dom_sf"/>
</dbReference>
<dbReference type="InterPro" id="IPR020843">
    <property type="entry name" value="PKS_ER"/>
</dbReference>
<dbReference type="PANTHER" id="PTHR42683">
    <property type="entry name" value="ALDEHYDE REDUCTASE"/>
    <property type="match status" value="1"/>
</dbReference>
<dbReference type="Pfam" id="PF08240">
    <property type="entry name" value="ADH_N"/>
    <property type="match status" value="1"/>
</dbReference>
<dbReference type="Pfam" id="PF00107">
    <property type="entry name" value="ADH_zinc_N"/>
    <property type="match status" value="1"/>
</dbReference>
<dbReference type="SMART" id="SM00829">
    <property type="entry name" value="PKS_ER"/>
    <property type="match status" value="1"/>
</dbReference>
<dbReference type="SUPFAM" id="SSF50129">
    <property type="entry name" value="GroES-like"/>
    <property type="match status" value="1"/>
</dbReference>
<dbReference type="SUPFAM" id="SSF51735">
    <property type="entry name" value="NAD(P)-binding Rossmann-fold domains"/>
    <property type="match status" value="1"/>
</dbReference>
<name>DPAS_CATRO</name>
<feature type="chain" id="PRO_0000446421" description="Dehydroprecondylocarpine acetate synthase">
    <location>
        <begin position="1"/>
        <end position="365"/>
    </location>
</feature>
<feature type="binding site" evidence="2">
    <location>
        <position position="105"/>
    </location>
    <ligand>
        <name>Zn(2+)</name>
        <dbReference type="ChEBI" id="CHEBI:29105"/>
    </ligand>
</feature>
<feature type="binding site" evidence="2">
    <location>
        <position position="108"/>
    </location>
    <ligand>
        <name>Zn(2+)</name>
        <dbReference type="ChEBI" id="CHEBI:29105"/>
    </ligand>
</feature>
<feature type="binding site" evidence="2">
    <location>
        <position position="111"/>
    </location>
    <ligand>
        <name>Zn(2+)</name>
        <dbReference type="ChEBI" id="CHEBI:29105"/>
    </ligand>
</feature>
<feature type="binding site" evidence="2">
    <location>
        <position position="119"/>
    </location>
    <ligand>
        <name>Zn(2+)</name>
        <dbReference type="ChEBI" id="CHEBI:29105"/>
    </ligand>
</feature>
<feature type="binding site" evidence="2">
    <location>
        <position position="194"/>
    </location>
    <ligand>
        <name>NADP(+)</name>
        <dbReference type="ChEBI" id="CHEBI:58349"/>
    </ligand>
</feature>
<feature type="binding site" evidence="2">
    <location>
        <position position="196"/>
    </location>
    <ligand>
        <name>NADP(+)</name>
        <dbReference type="ChEBI" id="CHEBI:58349"/>
    </ligand>
</feature>
<feature type="binding site" evidence="2">
    <location>
        <position position="197"/>
    </location>
    <ligand>
        <name>NADP(+)</name>
        <dbReference type="ChEBI" id="CHEBI:58349"/>
    </ligand>
</feature>
<feature type="binding site" evidence="2">
    <location>
        <position position="216"/>
    </location>
    <ligand>
        <name>NADP(+)</name>
        <dbReference type="ChEBI" id="CHEBI:58349"/>
    </ligand>
</feature>
<feature type="binding site" evidence="2">
    <location>
        <position position="217"/>
    </location>
    <ligand>
        <name>NADP(+)</name>
        <dbReference type="ChEBI" id="CHEBI:58349"/>
    </ligand>
</feature>
<feature type="binding site" evidence="2">
    <location>
        <position position="218"/>
    </location>
    <ligand>
        <name>NADP(+)</name>
        <dbReference type="ChEBI" id="CHEBI:58349"/>
    </ligand>
</feature>
<feature type="binding site" evidence="2">
    <location>
        <position position="221"/>
    </location>
    <ligand>
        <name>NADP(+)</name>
        <dbReference type="ChEBI" id="CHEBI:58349"/>
    </ligand>
</feature>
<feature type="binding site" evidence="2">
    <location>
        <position position="279"/>
    </location>
    <ligand>
        <name>NADP(+)</name>
        <dbReference type="ChEBI" id="CHEBI:58349"/>
    </ligand>
</feature>
<feature type="binding site" evidence="2">
    <location>
        <position position="281"/>
    </location>
    <ligand>
        <name>NADP(+)</name>
        <dbReference type="ChEBI" id="CHEBI:58349"/>
    </ligand>
</feature>
<feature type="binding site" evidence="2">
    <location>
        <position position="303"/>
    </location>
    <ligand>
        <name>NADP(+)</name>
        <dbReference type="ChEBI" id="CHEBI:58349"/>
    </ligand>
</feature>
<feature type="binding site" evidence="2">
    <location>
        <position position="305"/>
    </location>
    <ligand>
        <name>NADP(+)</name>
        <dbReference type="ChEBI" id="CHEBI:58349"/>
    </ligand>
</feature>
<feature type="binding site" evidence="2">
    <location>
        <position position="350"/>
    </location>
    <ligand>
        <name>NADP(+)</name>
        <dbReference type="ChEBI" id="CHEBI:58349"/>
    </ligand>
</feature>
<feature type="glycosylation site" description="N-linked (GlcNAc...) asparagine" evidence="3">
    <location>
        <position position="142"/>
    </location>
</feature>
<feature type="glycosylation site" description="N-linked (GlcNAc...) asparagine" evidence="3">
    <location>
        <position position="147"/>
    </location>
</feature>
<feature type="mutagenesis site" description="Normal activity." evidence="5">
    <original>T</original>
    <variation>A</variation>
    <location>
        <position position="54"/>
    </location>
</feature>
<feature type="mutagenesis site" description="Abolished activity." evidence="5">
    <original>T</original>
    <variation>F</variation>
    <location>
        <position position="54"/>
    </location>
</feature>
<feature type="mutagenesis site" description="Conserved ability to reduce precondylocarpine, but decreased accumulation of over reduced vincadifformine product." evidence="5">
    <original>M</original>
    <variation>H</variation>
    <location>
        <position position="74"/>
    </location>
</feature>
<feature type="mutagenesis site" description="Conserved ability to reduce precondylocarpine, but increased accumulation of over reduced vincadifformine product." evidence="5">
    <original>S</original>
    <variation>C</variation>
    <location>
        <position position="168"/>
    </location>
</feature>
<feature type="strand" evidence="11">
    <location>
        <begin position="13"/>
        <end position="19"/>
    </location>
</feature>
<feature type="turn" evidence="11">
    <location>
        <begin position="22"/>
        <end position="24"/>
    </location>
</feature>
<feature type="strand" evidence="11">
    <location>
        <begin position="27"/>
        <end position="33"/>
    </location>
</feature>
<feature type="strand" evidence="11">
    <location>
        <begin position="41"/>
        <end position="51"/>
    </location>
</feature>
<feature type="helix" evidence="11">
    <location>
        <begin position="53"/>
        <end position="59"/>
    </location>
</feature>
<feature type="strand" evidence="11">
    <location>
        <begin position="68"/>
        <end position="70"/>
    </location>
</feature>
<feature type="strand" evidence="11">
    <location>
        <begin position="75"/>
        <end position="83"/>
    </location>
</feature>
<feature type="strand" evidence="11">
    <location>
        <begin position="95"/>
        <end position="98"/>
    </location>
</feature>
<feature type="strand" evidence="11">
    <location>
        <begin position="139"/>
        <end position="147"/>
    </location>
</feature>
<feature type="helix" evidence="11">
    <location>
        <begin position="148"/>
        <end position="150"/>
    </location>
</feature>
<feature type="strand" evidence="11">
    <location>
        <begin position="151"/>
        <end position="153"/>
    </location>
</feature>
<feature type="turn" evidence="11">
    <location>
        <begin position="160"/>
        <end position="163"/>
    </location>
</feature>
<feature type="helix" evidence="11">
    <location>
        <begin position="164"/>
        <end position="166"/>
    </location>
</feature>
<feature type="helix" evidence="11">
    <location>
        <begin position="169"/>
        <end position="179"/>
    </location>
</feature>
<feature type="strand" evidence="11">
    <location>
        <begin position="188"/>
        <end position="192"/>
    </location>
</feature>
<feature type="helix" evidence="11">
    <location>
        <begin position="196"/>
        <end position="208"/>
    </location>
</feature>
<feature type="strand" evidence="11">
    <location>
        <begin position="211"/>
        <end position="217"/>
    </location>
</feature>
<feature type="helix" evidence="11">
    <location>
        <begin position="219"/>
        <end position="221"/>
    </location>
</feature>
<feature type="helix" evidence="11">
    <location>
        <begin position="222"/>
        <end position="226"/>
    </location>
</feature>
<feature type="strand" evidence="11">
    <location>
        <begin position="232"/>
        <end position="236"/>
    </location>
</feature>
<feature type="helix" evidence="11">
    <location>
        <begin position="240"/>
        <end position="245"/>
    </location>
</feature>
<feature type="turn" evidence="11">
    <location>
        <begin position="246"/>
        <end position="248"/>
    </location>
</feature>
<feature type="strand" evidence="11">
    <location>
        <begin position="250"/>
        <end position="255"/>
    </location>
</feature>
<feature type="helix" evidence="11">
    <location>
        <begin position="264"/>
        <end position="267"/>
    </location>
</feature>
<feature type="strand" evidence="11">
    <location>
        <begin position="270"/>
        <end position="278"/>
    </location>
</feature>
<feature type="helix" evidence="11">
    <location>
        <begin position="290"/>
        <end position="294"/>
    </location>
</feature>
<feature type="turn" evidence="11">
    <location>
        <begin position="295"/>
        <end position="297"/>
    </location>
</feature>
<feature type="strand" evidence="11">
    <location>
        <begin position="299"/>
        <end position="302"/>
    </location>
</feature>
<feature type="helix" evidence="11">
    <location>
        <begin position="308"/>
        <end position="320"/>
    </location>
</feature>
<feature type="strand" evidence="11">
    <location>
        <begin position="328"/>
        <end position="330"/>
    </location>
</feature>
<feature type="helix" evidence="11">
    <location>
        <begin position="332"/>
        <end position="334"/>
    </location>
</feature>
<feature type="helix" evidence="11">
    <location>
        <begin position="335"/>
        <end position="343"/>
    </location>
</feature>
<feature type="strand" evidence="11">
    <location>
        <begin position="347"/>
        <end position="349"/>
    </location>
</feature>
<feature type="strand" evidence="11">
    <location>
        <begin position="351"/>
        <end position="354"/>
    </location>
</feature>
<feature type="helix" evidence="11">
    <location>
        <begin position="355"/>
        <end position="358"/>
    </location>
</feature>
<reference key="1">
    <citation type="submission" date="2016-03" db="EMBL/GenBank/DDBJ databases">
        <title>The structural basis of ajmalicine biosynthesis: Active site elements that control stereoselectivity in alkaloids.</title>
        <authorList>
            <person name="Stavrinides A.K."/>
            <person name="O'Connor S.E."/>
            <person name="Tatsis E.C."/>
            <person name="Caputi L."/>
            <person name="Foureau E."/>
            <person name="Stevenson C.E.M."/>
            <person name="Lawson D.M."/>
            <person name="Courdavault V."/>
        </authorList>
    </citation>
    <scope>NUCLEOTIDE SEQUENCE [MRNA]</scope>
    <source>
        <strain>cv. Little Bright Eyes</strain>
    </source>
</reference>
<reference key="2">
    <citation type="journal article" date="2018" name="Science">
        <title>Missing enzymes in the biosynthesis of the anticancer drug vinblastine in Madagascar periwinkle.</title>
        <authorList>
            <person name="Caputi L."/>
            <person name="Franke J."/>
            <person name="Farrow S.C."/>
            <person name="Chung K."/>
            <person name="Payne R.M.E."/>
            <person name="Nguyen T.-D."/>
            <person name="Dang T.-T.T."/>
            <person name="Soares Teto Carqueijeiro I."/>
            <person name="Koudounas K."/>
            <person name="Duge de Bernonville T."/>
            <person name="Ameyaw B."/>
            <person name="Jones D.M."/>
            <person name="Vieira I.J.C."/>
            <person name="Courdavault V."/>
            <person name="O'Connor S.E."/>
        </authorList>
    </citation>
    <scope>FUNCTION</scope>
    <scope>DISRUPTION PHENOTYPE</scope>
    <scope>CATALYTIC ACTIVITY</scope>
    <scope>PATHWAY</scope>
    <scope>SUBCELLULAR LOCATION</scope>
    <scope>HOMODIMERIZATION</scope>
    <scope>INTERACTION WITH CS AND TS</scope>
    <source>
        <strain>cv. Little Bright Eyes</strain>
    </source>
</reference>
<reference evidence="10" key="3">
    <citation type="journal article" date="2022" name="Angew. Chem. Int. Ed.">
        <title>Expansion of the catalytic repertoire of alcohol dehydrogenases in plant metabolism.</title>
        <authorList>
            <person name="Langley C."/>
            <person name="Tatsis E."/>
            <person name="Hong B."/>
            <person name="Nakamura Y."/>
            <person name="Paetz C."/>
            <person name="Stevenson C.E.M."/>
            <person name="Basquin J."/>
            <person name="Lawson D.M."/>
            <person name="Caputi L."/>
            <person name="O'Connor S.E."/>
        </authorList>
    </citation>
    <scope>X-RAY CRYSTALLOGRAPHY (2.45 ANGSTROMS)</scope>
    <scope>FUNCTION</scope>
    <scope>CATALYTIC ACTIVITY</scope>
    <scope>MUTAGENESIS OF THR-54; MET-74 AND SER-168</scope>
</reference>
<proteinExistence type="evidence at protein level"/>
<protein>
    <recommendedName>
        <fullName evidence="6">Dehydroprecondylocarpine acetate synthase</fullName>
        <shortName evidence="7">CrDPAS</shortName>
        <ecNumber evidence="4 5">1.3.1.128</ecNumber>
    </recommendedName>
</protein>
<evidence type="ECO:0000250" key="1">
    <source>
        <dbReference type="UniProtKB" id="P00327"/>
    </source>
</evidence>
<evidence type="ECO:0000250" key="2">
    <source>
        <dbReference type="UniProtKB" id="W8JWW7"/>
    </source>
</evidence>
<evidence type="ECO:0000255" key="3">
    <source>
        <dbReference type="PROSITE-ProRule" id="PRU00498"/>
    </source>
</evidence>
<evidence type="ECO:0000269" key="4">
    <source>
    </source>
</evidence>
<evidence type="ECO:0000269" key="5">
    <source>
    </source>
</evidence>
<evidence type="ECO:0000303" key="6">
    <source>
    </source>
</evidence>
<evidence type="ECO:0000303" key="7">
    <source>
    </source>
</evidence>
<evidence type="ECO:0000305" key="8"/>
<evidence type="ECO:0000312" key="9">
    <source>
        <dbReference type="EMBL" id="ANQ45231.1"/>
    </source>
</evidence>
<evidence type="ECO:0007744" key="10">
    <source>
        <dbReference type="PDB" id="8B27"/>
    </source>
</evidence>
<evidence type="ECO:0007829" key="11">
    <source>
        <dbReference type="PDB" id="8B27"/>
    </source>
</evidence>
<keyword id="KW-0002">3D-structure</keyword>
<keyword id="KW-0017">Alkaloid metabolism</keyword>
<keyword id="KW-0963">Cytoplasm</keyword>
<keyword id="KW-0325">Glycoprotein</keyword>
<keyword id="KW-0479">Metal-binding</keyword>
<keyword id="KW-0521">NADP</keyword>
<keyword id="KW-0560">Oxidoreductase</keyword>
<keyword id="KW-0862">Zinc</keyword>
<organism>
    <name type="scientific">Catharanthus roseus</name>
    <name type="common">Madagascar periwinkle</name>
    <name type="synonym">Vinca rosea</name>
    <dbReference type="NCBI Taxonomy" id="4058"/>
    <lineage>
        <taxon>Eukaryota</taxon>
        <taxon>Viridiplantae</taxon>
        <taxon>Streptophyta</taxon>
        <taxon>Embryophyta</taxon>
        <taxon>Tracheophyta</taxon>
        <taxon>Spermatophyta</taxon>
        <taxon>Magnoliopsida</taxon>
        <taxon>eudicotyledons</taxon>
        <taxon>Gunneridae</taxon>
        <taxon>Pentapetalae</taxon>
        <taxon>asterids</taxon>
        <taxon>lamiids</taxon>
        <taxon>Gentianales</taxon>
        <taxon>Apocynaceae</taxon>
        <taxon>Rauvolfioideae</taxon>
        <taxon>Vinceae</taxon>
        <taxon>Catharanthinae</taxon>
        <taxon>Catharanthus</taxon>
    </lineage>
</organism>
<comment type="function">
    <text evidence="4 5">Component of the seco-iridoid and derivatives monoterpenoid indole alkaloids (MIAs, e.g. vinblastine, catharanthine, tabersonine, vincadifformine, vindoline, vincristine, quinine and strychnine) biosynthesis pathway (PubMed:29724909). Catalyzes the non-canonical 1,4-reduction of an alpha,beta-unsaturated iminium moiety; by contrast with the classic alcohol dehydrogenase mechanism, this reaction does not require a catalytic zinc or proton relay (PubMed:36198083). Converts precondylocarpine acetate to dihydroprecondylocarpine acetate, that is spontaneously converted into dehydrosecodine intermediate, precursor of angryline (PubMed:29724909, PubMed:36198083). May also trigger the non-stereoselective 1,4-reduction reaction at C15 of dehydrosecodine leading to the production of secodine, a precursor of vincadifformine (PubMed:36198083).</text>
</comment>
<comment type="catalytic activity">
    <reaction evidence="4 5">
        <text>dihydroprecondylocarpine acetate + NADP(+) = precondylocarpine acetate + NADPH + H(+)</text>
        <dbReference type="Rhea" id="RHEA:58576"/>
        <dbReference type="ChEBI" id="CHEBI:15378"/>
        <dbReference type="ChEBI" id="CHEBI:57783"/>
        <dbReference type="ChEBI" id="CHEBI:58349"/>
        <dbReference type="ChEBI" id="CHEBI:142769"/>
        <dbReference type="ChEBI" id="CHEBI:142770"/>
        <dbReference type="EC" id="1.3.1.128"/>
    </reaction>
    <physiologicalReaction direction="right-to-left" evidence="4 5">
        <dbReference type="Rhea" id="RHEA:58578"/>
    </physiologicalReaction>
</comment>
<comment type="cofactor">
    <cofactor evidence="1">
        <name>Zn(2+)</name>
        <dbReference type="ChEBI" id="CHEBI:29105"/>
    </cofactor>
</comment>
<comment type="pathway">
    <text evidence="4">Alkaloid biosynthesis.</text>
</comment>
<comment type="subunit">
    <text evidence="4">Homodimer. Interaction with catharanthine synthase (CS) and tabersonine synthase (TS).</text>
</comment>
<comment type="subcellular location">
    <subcellularLocation>
        <location evidence="4">Cytoplasm</location>
        <location evidence="4">Cytosol</location>
    </subcellularLocation>
</comment>
<comment type="disruption phenotype">
    <text evidence="4">Strong accumulation of precondylocarpine acetate.</text>
</comment>
<comment type="similarity">
    <text evidence="8">Belongs to the zinc-containing alcohol dehydrogenase family.</text>
</comment>
<comment type="online information" name="ORCAE database">
    <link uri="https://orcae.psb.ugent.be/taxa/catro/regular/v1/"/>
</comment>
<accession>A0A1B1FHP3</accession>
<sequence>MAGKSAEEEHPIKAYGWAVKDRTTGILSPFKFSRRATGDDDVRIKILYCGICHTDLASIKNEYEFLSYPLVPGMEIVGIATEVGKDVTKVKVGEKVALSAYLGCCGKCYSCVNELENYCPEVIIGYGTPYHDGTICYGGLSNETVANQSFVLRFPERLSPAGGAPLLSAGITSFSAMRNSGIDKPGLHVGVVGLGGLGHLAVKFAKAFGLKVTVISTTPSKKDDAINGLGADGFLLSRDDEQMKAAIGTLDAIIDTLAVVHPIAPLLDLLRSQGKFLLLGAPSQSLELPPIPLLSGGKSIIGSAAGNVKQTQEMLDFAAEHDITANVEIIPIEYINTAMERLDKGDVRYRFVVDIENTLTPPSEL</sequence>